<proteinExistence type="inferred from homology"/>
<name>MSBA_LEGPH</name>
<sequence length="588" mass="65419">MKNNLPIKSRLLYKRLLSYVKPFWPVLLLGVLANILYSGIDAGFTYMTKLFLDKSFITIDLNFVKQIPLIVLIGITLRGLVSSLGSYCMTWVARSVVKVLRQTVFSHIIHLPADYYDEATSGQLLSKILYDVEQVAQVSADALTDFIQNICLVIGLLTVMMVICWQLSLMFLLTIPFVGIIVNYTNKRVRRISHKVQKTMGEVTEIASEAIEGYRVVRIFGGERYEITKFNKATEYSRKNDMKVAISKAINVSGVQLVIAIGIATIIMAAIHLSTVITISAGSFLAIIAAMLQLIKPMKTLTTLNATIQRGLAGAESVFNLLDLPLERNNGLILKEKIRGEIEFKHVYHAYRQGQNILHDVNFVIEAGTSVALVGHSGSGKTTIASLLPRFYELSQGMITLDGMPIQQLSLESLRKQMSLVSQNVTLFNDTLANNIAYGRFDASREQIITAAKLAYADEFIKQLPDGYDTRVGENGVLLSGGQRQRIAIARAILKDAPILILDEATSALDSESEHYIQAALEQVMKGRTTLIIAHRLSTIKHAHKIIVLQHGRIVEQGSHQELLDMDGHYAQLYKVQQFGRINEEVVA</sequence>
<feature type="chain" id="PRO_0000092585" description="ATP-dependent lipid A-core flippase">
    <location>
        <begin position="1"/>
        <end position="588"/>
    </location>
</feature>
<feature type="transmembrane region" description="Helical" evidence="1">
    <location>
        <begin position="23"/>
        <end position="43"/>
    </location>
</feature>
<feature type="transmembrane region" description="Helical" evidence="1">
    <location>
        <begin position="56"/>
        <end position="76"/>
    </location>
</feature>
<feature type="transmembrane region" description="Helical" evidence="1">
    <location>
        <begin position="141"/>
        <end position="161"/>
    </location>
</feature>
<feature type="transmembrane region" description="Helical" evidence="1">
    <location>
        <begin position="162"/>
        <end position="182"/>
    </location>
</feature>
<feature type="transmembrane region" description="Helical" evidence="1">
    <location>
        <begin position="257"/>
        <end position="277"/>
    </location>
</feature>
<feature type="transmembrane region" description="Helical" evidence="1">
    <location>
        <begin position="278"/>
        <end position="298"/>
    </location>
</feature>
<feature type="domain" description="ABC transmembrane type-1" evidence="1">
    <location>
        <begin position="28"/>
        <end position="310"/>
    </location>
</feature>
<feature type="domain" description="ABC transporter" evidence="1">
    <location>
        <begin position="342"/>
        <end position="576"/>
    </location>
</feature>
<feature type="binding site" evidence="1">
    <location>
        <begin position="375"/>
        <end position="382"/>
    </location>
    <ligand>
        <name>ATP</name>
        <dbReference type="ChEBI" id="CHEBI:30616"/>
    </ligand>
</feature>
<comment type="function">
    <text evidence="1">Involved in lipopolysaccharide (LPS) biosynthesis. Translocates lipid A-core from the inner to the outer leaflet of the inner membrane. Transmembrane domains (TMD) form a pore in the inner membrane and the ATP-binding domain (NBD) is responsible for energy generation.</text>
</comment>
<comment type="catalytic activity">
    <reaction evidence="1">
        <text>ATP + H2O + lipid A-core oligosaccharideSide 1 = ADP + phosphate + lipid A-core oligosaccharideSide 2.</text>
        <dbReference type="EC" id="7.5.2.6"/>
    </reaction>
</comment>
<comment type="subunit">
    <text evidence="1">Homodimer.</text>
</comment>
<comment type="subcellular location">
    <subcellularLocation>
        <location evidence="1">Cell inner membrane</location>
        <topology evidence="1">Multi-pass membrane protein</topology>
    </subcellularLocation>
</comment>
<comment type="domain">
    <text evidence="1">In MsbA the ATP-binding domain (NBD) and the transmembrane domain (TMD) are fused.</text>
</comment>
<comment type="similarity">
    <text evidence="1">Belongs to the ABC transporter superfamily. Lipid exporter (TC 3.A.1.106) family.</text>
</comment>
<comment type="sequence caution" evidence="2">
    <conflict type="erroneous initiation">
        <sequence resource="EMBL-CDS" id="AAU27898"/>
    </conflict>
</comment>
<protein>
    <recommendedName>
        <fullName evidence="1">ATP-dependent lipid A-core flippase</fullName>
        <ecNumber evidence="1">7.5.2.6</ecNumber>
    </recommendedName>
    <alternativeName>
        <fullName evidence="1">Lipid A export ATP-binding/permease protein MsbA</fullName>
    </alternativeName>
</protein>
<gene>
    <name evidence="1" type="primary">msbA</name>
    <name type="ordered locus">lpg1819</name>
</gene>
<evidence type="ECO:0000255" key="1">
    <source>
        <dbReference type="HAMAP-Rule" id="MF_01703"/>
    </source>
</evidence>
<evidence type="ECO:0000305" key="2"/>
<reference key="1">
    <citation type="journal article" date="2004" name="Science">
        <title>The genomic sequence of the accidental pathogen Legionella pneumophila.</title>
        <authorList>
            <person name="Chien M."/>
            <person name="Morozova I."/>
            <person name="Shi S."/>
            <person name="Sheng H."/>
            <person name="Chen J."/>
            <person name="Gomez S.M."/>
            <person name="Asamani G."/>
            <person name="Hill K."/>
            <person name="Nuara J."/>
            <person name="Feder M."/>
            <person name="Rineer J."/>
            <person name="Greenberg J.J."/>
            <person name="Steshenko V."/>
            <person name="Park S.H."/>
            <person name="Zhao B."/>
            <person name="Teplitskaya E."/>
            <person name="Edwards J.R."/>
            <person name="Pampou S."/>
            <person name="Georghiou A."/>
            <person name="Chou I.-C."/>
            <person name="Iannuccilli W."/>
            <person name="Ulz M.E."/>
            <person name="Kim D.H."/>
            <person name="Geringer-Sameth A."/>
            <person name="Goldsberry C."/>
            <person name="Morozov P."/>
            <person name="Fischer S.G."/>
            <person name="Segal G."/>
            <person name="Qu X."/>
            <person name="Rzhetsky A."/>
            <person name="Zhang P."/>
            <person name="Cayanis E."/>
            <person name="De Jong P.J."/>
            <person name="Ju J."/>
            <person name="Kalachikov S."/>
            <person name="Shuman H.A."/>
            <person name="Russo J.J."/>
        </authorList>
    </citation>
    <scope>NUCLEOTIDE SEQUENCE [LARGE SCALE GENOMIC DNA]</scope>
    <source>
        <strain>Philadelphia 1 / ATCC 33152 / DSM 7513</strain>
    </source>
</reference>
<dbReference type="EC" id="7.5.2.6" evidence="1"/>
<dbReference type="EMBL" id="AE017354">
    <property type="protein sequence ID" value="AAU27898.1"/>
    <property type="status" value="ALT_INIT"/>
    <property type="molecule type" value="Genomic_DNA"/>
</dbReference>
<dbReference type="RefSeq" id="WP_011946747.1">
    <property type="nucleotide sequence ID" value="NC_002942.5"/>
</dbReference>
<dbReference type="RefSeq" id="YP_095845.1">
    <property type="nucleotide sequence ID" value="NC_002942.5"/>
</dbReference>
<dbReference type="SMR" id="Q5ZUH9"/>
<dbReference type="STRING" id="272624.lpg1819"/>
<dbReference type="PaxDb" id="272624-lpg1819"/>
<dbReference type="GeneID" id="57035811"/>
<dbReference type="KEGG" id="lpn:lpg1819"/>
<dbReference type="PATRIC" id="fig|272624.6.peg.1907"/>
<dbReference type="eggNOG" id="COG1132">
    <property type="taxonomic scope" value="Bacteria"/>
</dbReference>
<dbReference type="HOGENOM" id="CLU_000604_84_3_6"/>
<dbReference type="OrthoDB" id="6336411at2"/>
<dbReference type="Proteomes" id="UP000000609">
    <property type="component" value="Chromosome"/>
</dbReference>
<dbReference type="GO" id="GO:0005886">
    <property type="term" value="C:plasma membrane"/>
    <property type="evidence" value="ECO:0007669"/>
    <property type="project" value="UniProtKB-SubCell"/>
</dbReference>
<dbReference type="GO" id="GO:0015421">
    <property type="term" value="F:ABC-type oligopeptide transporter activity"/>
    <property type="evidence" value="ECO:0007669"/>
    <property type="project" value="TreeGrafter"/>
</dbReference>
<dbReference type="GO" id="GO:0005524">
    <property type="term" value="F:ATP binding"/>
    <property type="evidence" value="ECO:0007669"/>
    <property type="project" value="UniProtKB-KW"/>
</dbReference>
<dbReference type="GO" id="GO:0016887">
    <property type="term" value="F:ATP hydrolysis activity"/>
    <property type="evidence" value="ECO:0007669"/>
    <property type="project" value="InterPro"/>
</dbReference>
<dbReference type="GO" id="GO:0034040">
    <property type="term" value="F:ATPase-coupled lipid transmembrane transporter activity"/>
    <property type="evidence" value="ECO:0007669"/>
    <property type="project" value="InterPro"/>
</dbReference>
<dbReference type="CDD" id="cd18552">
    <property type="entry name" value="ABC_6TM_MsbA_like"/>
    <property type="match status" value="1"/>
</dbReference>
<dbReference type="FunFam" id="3.40.50.300:FF:000287">
    <property type="entry name" value="Multidrug ABC transporter ATP-binding protein"/>
    <property type="match status" value="1"/>
</dbReference>
<dbReference type="Gene3D" id="1.20.1560.10">
    <property type="entry name" value="ABC transporter type 1, transmembrane domain"/>
    <property type="match status" value="1"/>
</dbReference>
<dbReference type="Gene3D" id="3.40.50.300">
    <property type="entry name" value="P-loop containing nucleotide triphosphate hydrolases"/>
    <property type="match status" value="1"/>
</dbReference>
<dbReference type="InterPro" id="IPR003593">
    <property type="entry name" value="AAA+_ATPase"/>
</dbReference>
<dbReference type="InterPro" id="IPR011527">
    <property type="entry name" value="ABC1_TM_dom"/>
</dbReference>
<dbReference type="InterPro" id="IPR036640">
    <property type="entry name" value="ABC1_TM_sf"/>
</dbReference>
<dbReference type="InterPro" id="IPR003439">
    <property type="entry name" value="ABC_transporter-like_ATP-bd"/>
</dbReference>
<dbReference type="InterPro" id="IPR017871">
    <property type="entry name" value="ABC_transporter-like_CS"/>
</dbReference>
<dbReference type="InterPro" id="IPR011917">
    <property type="entry name" value="ABC_transpr_lipidA"/>
</dbReference>
<dbReference type="InterPro" id="IPR027417">
    <property type="entry name" value="P-loop_NTPase"/>
</dbReference>
<dbReference type="InterPro" id="IPR039421">
    <property type="entry name" value="Type_1_exporter"/>
</dbReference>
<dbReference type="NCBIfam" id="TIGR02203">
    <property type="entry name" value="MsbA_lipidA"/>
    <property type="match status" value="1"/>
</dbReference>
<dbReference type="PANTHER" id="PTHR43394:SF1">
    <property type="entry name" value="ATP-BINDING CASSETTE SUB-FAMILY B MEMBER 10, MITOCHONDRIAL"/>
    <property type="match status" value="1"/>
</dbReference>
<dbReference type="PANTHER" id="PTHR43394">
    <property type="entry name" value="ATP-DEPENDENT PERMEASE MDL1, MITOCHONDRIAL"/>
    <property type="match status" value="1"/>
</dbReference>
<dbReference type="Pfam" id="PF00664">
    <property type="entry name" value="ABC_membrane"/>
    <property type="match status" value="1"/>
</dbReference>
<dbReference type="Pfam" id="PF00005">
    <property type="entry name" value="ABC_tran"/>
    <property type="match status" value="1"/>
</dbReference>
<dbReference type="SMART" id="SM00382">
    <property type="entry name" value="AAA"/>
    <property type="match status" value="1"/>
</dbReference>
<dbReference type="SUPFAM" id="SSF90123">
    <property type="entry name" value="ABC transporter transmembrane region"/>
    <property type="match status" value="1"/>
</dbReference>
<dbReference type="SUPFAM" id="SSF52540">
    <property type="entry name" value="P-loop containing nucleoside triphosphate hydrolases"/>
    <property type="match status" value="1"/>
</dbReference>
<dbReference type="PROSITE" id="PS50929">
    <property type="entry name" value="ABC_TM1F"/>
    <property type="match status" value="1"/>
</dbReference>
<dbReference type="PROSITE" id="PS00211">
    <property type="entry name" value="ABC_TRANSPORTER_1"/>
    <property type="match status" value="1"/>
</dbReference>
<dbReference type="PROSITE" id="PS50893">
    <property type="entry name" value="ABC_TRANSPORTER_2"/>
    <property type="match status" value="1"/>
</dbReference>
<dbReference type="PROSITE" id="PS51239">
    <property type="entry name" value="MSBA"/>
    <property type="match status" value="1"/>
</dbReference>
<organism>
    <name type="scientific">Legionella pneumophila subsp. pneumophila (strain Philadelphia 1 / ATCC 33152 / DSM 7513)</name>
    <dbReference type="NCBI Taxonomy" id="272624"/>
    <lineage>
        <taxon>Bacteria</taxon>
        <taxon>Pseudomonadati</taxon>
        <taxon>Pseudomonadota</taxon>
        <taxon>Gammaproteobacteria</taxon>
        <taxon>Legionellales</taxon>
        <taxon>Legionellaceae</taxon>
        <taxon>Legionella</taxon>
    </lineage>
</organism>
<keyword id="KW-0067">ATP-binding</keyword>
<keyword id="KW-0997">Cell inner membrane</keyword>
<keyword id="KW-1003">Cell membrane</keyword>
<keyword id="KW-0445">Lipid transport</keyword>
<keyword id="KW-0472">Membrane</keyword>
<keyword id="KW-0547">Nucleotide-binding</keyword>
<keyword id="KW-1185">Reference proteome</keyword>
<keyword id="KW-1278">Translocase</keyword>
<keyword id="KW-0812">Transmembrane</keyword>
<keyword id="KW-1133">Transmembrane helix</keyword>
<keyword id="KW-0813">Transport</keyword>
<accession>Q5ZUH9</accession>